<feature type="initiator methionine" description="Removed" evidence="3">
    <location>
        <position position="1"/>
    </location>
</feature>
<feature type="chain" id="PRO_0000185083" description="Xaa-Pro aminopeptidase 1">
    <location>
        <begin position="2"/>
        <end position="623"/>
    </location>
</feature>
<feature type="binding site" evidence="1">
    <location>
        <position position="77"/>
    </location>
    <ligand>
        <name>a peptide</name>
        <dbReference type="ChEBI" id="CHEBI:60466"/>
    </ligand>
</feature>
<feature type="binding site" evidence="1">
    <location>
        <position position="395"/>
    </location>
    <ligand>
        <name>a peptide</name>
        <dbReference type="ChEBI" id="CHEBI:60466"/>
    </ligand>
</feature>
<feature type="binding site" evidence="4 22">
    <location>
        <position position="415"/>
    </location>
    <ligand>
        <name>Mn(2+)</name>
        <dbReference type="ChEBI" id="CHEBI:29035"/>
        <label>1</label>
    </ligand>
</feature>
<feature type="binding site" evidence="4 22">
    <location>
        <position position="426"/>
    </location>
    <ligand>
        <name>Mn(2+)</name>
        <dbReference type="ChEBI" id="CHEBI:29035"/>
        <label>1</label>
    </ligand>
</feature>
<feature type="binding site" evidence="4 22">
    <location>
        <position position="426"/>
    </location>
    <ligand>
        <name>Mn(2+)</name>
        <dbReference type="ChEBI" id="CHEBI:29035"/>
        <label>2</label>
    </ligand>
</feature>
<feature type="binding site" evidence="1">
    <location>
        <position position="489"/>
    </location>
    <ligand>
        <name>a peptide</name>
        <dbReference type="ChEBI" id="CHEBI:60466"/>
    </ligand>
</feature>
<feature type="binding site" evidence="4 22">
    <location>
        <position position="489"/>
    </location>
    <ligand>
        <name>Mn(2+)</name>
        <dbReference type="ChEBI" id="CHEBI:29035"/>
        <label>2</label>
    </ligand>
</feature>
<feature type="binding site" evidence="1">
    <location>
        <position position="498"/>
    </location>
    <ligand>
        <name>a peptide</name>
        <dbReference type="ChEBI" id="CHEBI:60466"/>
    </ligand>
</feature>
<feature type="binding site" evidence="1">
    <location>
        <position position="523"/>
    </location>
    <ligand>
        <name>a peptide</name>
        <dbReference type="ChEBI" id="CHEBI:60466"/>
    </ligand>
</feature>
<feature type="binding site" evidence="4 22">
    <location>
        <position position="523"/>
    </location>
    <ligand>
        <name>Mn(2+)</name>
        <dbReference type="ChEBI" id="CHEBI:29035"/>
        <label>2</label>
    </ligand>
</feature>
<feature type="binding site" evidence="4 22">
    <location>
        <position position="537"/>
    </location>
    <ligand>
        <name>Mn(2+)</name>
        <dbReference type="ChEBI" id="CHEBI:29035"/>
        <label>1</label>
    </ligand>
</feature>
<feature type="binding site" evidence="4 22">
    <location>
        <position position="537"/>
    </location>
    <ligand>
        <name>Mn(2+)</name>
        <dbReference type="ChEBI" id="CHEBI:29035"/>
        <label>2</label>
    </ligand>
</feature>
<feature type="modified residue" description="N6-acetyllysine" evidence="23">
    <location>
        <position position="304"/>
    </location>
</feature>
<feature type="splice variant" id="VSP_045250" description="In isoform 3 and isoform 4." evidence="9">
    <original>M</original>
    <variation>MAASRKPPRVRVNHQDFQLRNLRIIEPNEVTHSGDTGVETDGRM</variation>
    <location>
        <position position="1"/>
    </location>
</feature>
<feature type="splice variant" id="VSP_051752" description="In isoform 2 and isoform 4." evidence="10">
    <location>
        <begin position="398"/>
        <end position="421"/>
    </location>
</feature>
<feature type="mutagenesis site" description="Reduces activity by 10%." evidence="4">
    <original>E</original>
    <variation>A</variation>
    <location>
        <position position="41"/>
    </location>
</feature>
<feature type="mutagenesis site" description="Interferes with dimerization and reduces activity by 94%." evidence="4">
    <original>W</original>
    <variation>E</variation>
    <location>
        <position position="477"/>
    </location>
</feature>
<feature type="sequence conflict" description="In Ref. 10; AAH13417." evidence="12" ref="10">
    <original>W</original>
    <variation>C</variation>
    <location>
        <position position="90"/>
    </location>
</feature>
<feature type="sequence conflict" description="In Ref. 4; BAF82125." evidence="12" ref="4">
    <original>K</original>
    <variation>R</variation>
    <location>
        <position position="131"/>
    </location>
</feature>
<feature type="sequence conflict" description="In Ref. 1; CAA65068 and 2; AAF97866." evidence="12" ref="1 2">
    <original>R</original>
    <variation>P</variation>
    <location>
        <position position="332"/>
    </location>
</feature>
<feature type="sequence conflict" description="In Ref. 7; BAD97233." evidence="12" ref="7">
    <original>N</original>
    <variation>D</variation>
    <location>
        <position position="496"/>
    </location>
</feature>
<feature type="sequence conflict" description="In Ref. 7; BAD97233." evidence="12" ref="7">
    <original>H</original>
    <variation>R</variation>
    <location>
        <position position="498"/>
    </location>
</feature>
<feature type="sequence conflict" description="In Ref. 4; BAF82125." evidence="12" ref="4">
    <original>I</original>
    <variation>T</variation>
    <location>
        <position position="572"/>
    </location>
</feature>
<feature type="helix" evidence="24">
    <location>
        <begin position="7"/>
        <end position="16"/>
    </location>
</feature>
<feature type="turn" evidence="24">
    <location>
        <begin position="20"/>
        <end position="22"/>
    </location>
</feature>
<feature type="strand" evidence="24">
    <location>
        <begin position="28"/>
        <end position="32"/>
    </location>
</feature>
<feature type="helix" evidence="24">
    <location>
        <begin position="45"/>
        <end position="47"/>
    </location>
</feature>
<feature type="helix" evidence="24">
    <location>
        <begin position="49"/>
        <end position="54"/>
    </location>
</feature>
<feature type="strand" evidence="24">
    <location>
        <begin position="62"/>
        <end position="68"/>
    </location>
</feature>
<feature type="strand" evidence="24">
    <location>
        <begin position="70"/>
        <end position="74"/>
    </location>
</feature>
<feature type="helix" evidence="24">
    <location>
        <begin position="76"/>
        <end position="78"/>
    </location>
</feature>
<feature type="helix" evidence="24">
    <location>
        <begin position="79"/>
        <end position="85"/>
    </location>
</feature>
<feature type="strand" evidence="24">
    <location>
        <begin position="90"/>
        <end position="94"/>
    </location>
</feature>
<feature type="helix" evidence="24">
    <location>
        <begin position="103"/>
        <end position="110"/>
    </location>
</feature>
<feature type="strand" evidence="24">
    <location>
        <begin position="116"/>
        <end position="119"/>
    </location>
</feature>
<feature type="helix" evidence="24">
    <location>
        <begin position="121"/>
        <end position="123"/>
    </location>
</feature>
<feature type="helix" evidence="24">
    <location>
        <begin position="126"/>
        <end position="138"/>
    </location>
</feature>
<feature type="strand" evidence="24">
    <location>
        <begin position="142"/>
        <end position="145"/>
    </location>
</feature>
<feature type="helix" evidence="24">
    <location>
        <begin position="150"/>
        <end position="154"/>
    </location>
</feature>
<feature type="helix" evidence="24">
    <location>
        <begin position="171"/>
        <end position="174"/>
    </location>
</feature>
<feature type="helix" evidence="24">
    <location>
        <begin position="178"/>
        <end position="190"/>
    </location>
</feature>
<feature type="turn" evidence="24">
    <location>
        <begin position="191"/>
        <end position="193"/>
    </location>
</feature>
<feature type="strand" evidence="24">
    <location>
        <begin position="194"/>
        <end position="199"/>
    </location>
</feature>
<feature type="helix" evidence="24">
    <location>
        <begin position="202"/>
        <end position="209"/>
    </location>
</feature>
<feature type="strand" evidence="24">
    <location>
        <begin position="215"/>
        <end position="219"/>
    </location>
</feature>
<feature type="strand" evidence="24">
    <location>
        <begin position="225"/>
        <end position="231"/>
    </location>
</feature>
<feature type="strand" evidence="24">
    <location>
        <begin position="233"/>
        <end position="236"/>
    </location>
</feature>
<feature type="helix" evidence="24">
    <location>
        <begin position="240"/>
        <end position="243"/>
    </location>
</feature>
<feature type="helix" evidence="24">
    <location>
        <begin position="245"/>
        <end position="250"/>
    </location>
</feature>
<feature type="turn" evidence="24">
    <location>
        <begin position="251"/>
        <end position="254"/>
    </location>
</feature>
<feature type="helix" evidence="24">
    <location>
        <begin position="259"/>
        <end position="261"/>
    </location>
</feature>
<feature type="strand" evidence="24">
    <location>
        <begin position="263"/>
        <end position="266"/>
    </location>
</feature>
<feature type="helix" evidence="24">
    <location>
        <begin position="268"/>
        <end position="270"/>
    </location>
</feature>
<feature type="helix" evidence="24">
    <location>
        <begin position="271"/>
        <end position="280"/>
    </location>
</feature>
<feature type="strand" evidence="24">
    <location>
        <begin position="287"/>
        <end position="291"/>
    </location>
</feature>
<feature type="helix" evidence="24">
    <location>
        <begin position="296"/>
        <end position="301"/>
    </location>
</feature>
<feature type="helix" evidence="24">
    <location>
        <begin position="304"/>
        <end position="306"/>
    </location>
</feature>
<feature type="strand" evidence="24">
    <location>
        <begin position="307"/>
        <end position="312"/>
    </location>
</feature>
<feature type="helix" evidence="24">
    <location>
        <begin position="314"/>
        <end position="320"/>
    </location>
</feature>
<feature type="helix" evidence="24">
    <location>
        <begin position="324"/>
        <end position="351"/>
    </location>
</feature>
<feature type="helix" evidence="24">
    <location>
        <begin position="352"/>
        <end position="354"/>
    </location>
</feature>
<feature type="helix" evidence="24">
    <location>
        <begin position="359"/>
        <end position="371"/>
    </location>
</feature>
<feature type="strand" evidence="24">
    <location>
        <begin position="376"/>
        <end position="381"/>
    </location>
</feature>
<feature type="strand" evidence="24">
    <location>
        <begin position="384"/>
        <end position="387"/>
    </location>
</feature>
<feature type="helix" evidence="24">
    <location>
        <begin position="388"/>
        <end position="392"/>
    </location>
</feature>
<feature type="helix" evidence="24">
    <location>
        <begin position="400"/>
        <end position="402"/>
    </location>
</feature>
<feature type="strand" evidence="24">
    <location>
        <begin position="412"/>
        <end position="416"/>
    </location>
</feature>
<feature type="strand" evidence="24">
    <location>
        <begin position="418"/>
        <end position="420"/>
    </location>
</feature>
<feature type="strand" evidence="24">
    <location>
        <begin position="427"/>
        <end position="431"/>
    </location>
</feature>
<feature type="helix" evidence="24">
    <location>
        <begin position="438"/>
        <end position="455"/>
    </location>
</feature>
<feature type="helix" evidence="24">
    <location>
        <begin position="465"/>
        <end position="472"/>
    </location>
</feature>
<feature type="helix" evidence="24">
    <location>
        <begin position="474"/>
        <end position="478"/>
    </location>
</feature>
<feature type="strand" evidence="24">
    <location>
        <begin position="487"/>
        <end position="490"/>
    </location>
</feature>
<feature type="strand" evidence="24">
    <location>
        <begin position="493"/>
        <end position="495"/>
    </location>
</feature>
<feature type="strand" evidence="24">
    <location>
        <begin position="519"/>
        <end position="522"/>
    </location>
</feature>
<feature type="strand" evidence="24">
    <location>
        <begin position="525"/>
        <end position="528"/>
    </location>
</feature>
<feature type="turn" evidence="24">
    <location>
        <begin position="529"/>
        <end position="531"/>
    </location>
</feature>
<feature type="strand" evidence="24">
    <location>
        <begin position="532"/>
        <end position="535"/>
    </location>
</feature>
<feature type="strand" evidence="24">
    <location>
        <begin position="537"/>
        <end position="545"/>
    </location>
</feature>
<feature type="strand" evidence="24">
    <location>
        <begin position="552"/>
        <end position="554"/>
    </location>
</feature>
<feature type="strand" evidence="24">
    <location>
        <begin position="556"/>
        <end position="561"/>
    </location>
</feature>
<feature type="helix" evidence="24">
    <location>
        <begin position="569"/>
        <end position="571"/>
    </location>
</feature>
<feature type="helix" evidence="24">
    <location>
        <begin position="574"/>
        <end position="576"/>
    </location>
</feature>
<feature type="helix" evidence="24">
    <location>
        <begin position="579"/>
        <end position="602"/>
    </location>
</feature>
<feature type="helix" evidence="24">
    <location>
        <begin position="606"/>
        <end position="614"/>
    </location>
</feature>
<reference evidence="12 19" key="1">
    <citation type="journal article" date="1997" name="Cytogenet. Cell Genet.">
        <title>Isolation and sequence analysis of a human cDNA clone (XPNPEPL) homologous to X-prolyl aminopeptidase (aminopeptidase P).</title>
        <authorList>
            <person name="Vanhoof G."/>
            <person name="Goossens F."/>
            <person name="Juliano M.A."/>
            <person name="Juliano L."/>
            <person name="Hendriks D."/>
            <person name="Schatteman K."/>
            <person name="Lin A.H."/>
            <person name="Scharpe S."/>
        </authorList>
    </citation>
    <scope>NUCLEOTIDE SEQUENCE [MRNA] (ISOFORM 1)</scope>
    <scope>TISSUE SPECIFICITY</scope>
    <source>
        <tissue>Lymphocyte</tissue>
    </source>
</reference>
<reference evidence="12 14" key="2">
    <citation type="journal article" date="2000" name="Arch. Biochem. Biophys.">
        <title>Cloning, chromosomal sublocalization of the human soluble aminopeptidase P gene (XPNPEP1) to 10q25.3 and conservation of the putative proton shuttle and metal ligand binding sites with XPNPEP2.</title>
        <authorList>
            <person name="Sprinkle T.J."/>
            <person name="Caldwell C."/>
            <person name="Ryan J.W."/>
        </authorList>
    </citation>
    <scope>NUCLEOTIDE SEQUENCE [MRNA] (ISOFORM 1)</scope>
</reference>
<reference evidence="12 13" key="3">
    <citation type="journal article" date="2000" name="Biochemistry">
        <title>Cloning, expression, and characterization of human cytosolic aminopeptidase P: a single manganese(II)-dependent enzyme.</title>
        <authorList>
            <person name="Cottrell G.S."/>
            <person name="Hooper N.M."/>
            <person name="Turner A.J."/>
        </authorList>
    </citation>
    <scope>NUCLEOTIDE SEQUENCE [MRNA] (ISOFORM 1)</scope>
    <scope>FUNCTION</scope>
    <scope>CATALYTIC ACTIVITY</scope>
    <scope>COFACTOR</scope>
    <scope>ACTIVITY REGULATION</scope>
    <scope>BIOPHYSICOCHEMICAL PROPERTIES</scope>
    <scope>SUBUNIT</scope>
    <source>
        <tissue evidence="2">Pancreatic adenocarcinoma</tissue>
    </source>
</reference>
<reference key="4">
    <citation type="journal article" date="2004" name="Nat. Genet.">
        <title>Complete sequencing and characterization of 21,243 full-length human cDNAs.</title>
        <authorList>
            <person name="Ota T."/>
            <person name="Suzuki Y."/>
            <person name="Nishikawa T."/>
            <person name="Otsuki T."/>
            <person name="Sugiyama T."/>
            <person name="Irie R."/>
            <person name="Wakamatsu A."/>
            <person name="Hayashi K."/>
            <person name="Sato H."/>
            <person name="Nagai K."/>
            <person name="Kimura K."/>
            <person name="Makita H."/>
            <person name="Sekine M."/>
            <person name="Obayashi M."/>
            <person name="Nishi T."/>
            <person name="Shibahara T."/>
            <person name="Tanaka T."/>
            <person name="Ishii S."/>
            <person name="Yamamoto J."/>
            <person name="Saito K."/>
            <person name="Kawai Y."/>
            <person name="Isono Y."/>
            <person name="Nakamura Y."/>
            <person name="Nagahari K."/>
            <person name="Murakami K."/>
            <person name="Yasuda T."/>
            <person name="Iwayanagi T."/>
            <person name="Wagatsuma M."/>
            <person name="Shiratori A."/>
            <person name="Sudo H."/>
            <person name="Hosoiri T."/>
            <person name="Kaku Y."/>
            <person name="Kodaira H."/>
            <person name="Kondo H."/>
            <person name="Sugawara M."/>
            <person name="Takahashi M."/>
            <person name="Kanda K."/>
            <person name="Yokoi T."/>
            <person name="Furuya T."/>
            <person name="Kikkawa E."/>
            <person name="Omura Y."/>
            <person name="Abe K."/>
            <person name="Kamihara K."/>
            <person name="Katsuta N."/>
            <person name="Sato K."/>
            <person name="Tanikawa M."/>
            <person name="Yamazaki M."/>
            <person name="Ninomiya K."/>
            <person name="Ishibashi T."/>
            <person name="Yamashita H."/>
            <person name="Murakawa K."/>
            <person name="Fujimori K."/>
            <person name="Tanai H."/>
            <person name="Kimata M."/>
            <person name="Watanabe M."/>
            <person name="Hiraoka S."/>
            <person name="Chiba Y."/>
            <person name="Ishida S."/>
            <person name="Ono Y."/>
            <person name="Takiguchi S."/>
            <person name="Watanabe S."/>
            <person name="Yosida M."/>
            <person name="Hotuta T."/>
            <person name="Kusano J."/>
            <person name="Kanehori K."/>
            <person name="Takahashi-Fujii A."/>
            <person name="Hara H."/>
            <person name="Tanase T.-O."/>
            <person name="Nomura Y."/>
            <person name="Togiya S."/>
            <person name="Komai F."/>
            <person name="Hara R."/>
            <person name="Takeuchi K."/>
            <person name="Arita M."/>
            <person name="Imose N."/>
            <person name="Musashino K."/>
            <person name="Yuuki H."/>
            <person name="Oshima A."/>
            <person name="Sasaki N."/>
            <person name="Aotsuka S."/>
            <person name="Yoshikawa Y."/>
            <person name="Matsunawa H."/>
            <person name="Ichihara T."/>
            <person name="Shiohata N."/>
            <person name="Sano S."/>
            <person name="Moriya S."/>
            <person name="Momiyama H."/>
            <person name="Satoh N."/>
            <person name="Takami S."/>
            <person name="Terashima Y."/>
            <person name="Suzuki O."/>
            <person name="Nakagawa S."/>
            <person name="Senoh A."/>
            <person name="Mizoguchi H."/>
            <person name="Goto Y."/>
            <person name="Shimizu F."/>
            <person name="Wakebe H."/>
            <person name="Hishigaki H."/>
            <person name="Watanabe T."/>
            <person name="Sugiyama A."/>
            <person name="Takemoto M."/>
            <person name="Kawakami B."/>
            <person name="Yamazaki M."/>
            <person name="Watanabe K."/>
            <person name="Kumagai A."/>
            <person name="Itakura S."/>
            <person name="Fukuzumi Y."/>
            <person name="Fujimori Y."/>
            <person name="Komiyama M."/>
            <person name="Tashiro H."/>
            <person name="Tanigami A."/>
            <person name="Fujiwara T."/>
            <person name="Ono T."/>
            <person name="Yamada K."/>
            <person name="Fujii Y."/>
            <person name="Ozaki K."/>
            <person name="Hirao M."/>
            <person name="Ohmori Y."/>
            <person name="Kawabata A."/>
            <person name="Hikiji T."/>
            <person name="Kobatake N."/>
            <person name="Inagaki H."/>
            <person name="Ikema Y."/>
            <person name="Okamoto S."/>
            <person name="Okitani R."/>
            <person name="Kawakami T."/>
            <person name="Noguchi S."/>
            <person name="Itoh T."/>
            <person name="Shigeta K."/>
            <person name="Senba T."/>
            <person name="Matsumura K."/>
            <person name="Nakajima Y."/>
            <person name="Mizuno T."/>
            <person name="Morinaga M."/>
            <person name="Sasaki M."/>
            <person name="Togashi T."/>
            <person name="Oyama M."/>
            <person name="Hata H."/>
            <person name="Watanabe M."/>
            <person name="Komatsu T."/>
            <person name="Mizushima-Sugano J."/>
            <person name="Satoh T."/>
            <person name="Shirai Y."/>
            <person name="Takahashi Y."/>
            <person name="Nakagawa K."/>
            <person name="Okumura K."/>
            <person name="Nagase T."/>
            <person name="Nomura N."/>
            <person name="Kikuchi H."/>
            <person name="Masuho Y."/>
            <person name="Yamashita R."/>
            <person name="Nakai K."/>
            <person name="Yada T."/>
            <person name="Nakamura Y."/>
            <person name="Ohara O."/>
            <person name="Isogai T."/>
            <person name="Sugano S."/>
        </authorList>
    </citation>
    <scope>NUCLEOTIDE SEQUENCE [LARGE SCALE MRNA] (ISOFORM 3)</scope>
</reference>
<reference evidence="12 20" key="5">
    <citation type="submission" date="2004-06" db="EMBL/GenBank/DDBJ databases">
        <title>Cloning of human full open reading frames in Gateway(TM) system entry vector (pDONR201).</title>
        <authorList>
            <person name="Ebert L."/>
            <person name="Schick M."/>
            <person name="Neubert P."/>
            <person name="Schatten R."/>
            <person name="Henze S."/>
            <person name="Korn B."/>
        </authorList>
    </citation>
    <scope>NUCLEOTIDE SEQUENCE [LARGE SCALE MRNA] (ISOFORM 1)</scope>
</reference>
<reference evidence="12 20" key="6">
    <citation type="submission" date="2005-04" db="EMBL/GenBank/DDBJ databases">
        <authorList>
            <person name="Totoki Y."/>
            <person name="Toyoda A."/>
            <person name="Takeda T."/>
            <person name="Sakaki Y."/>
            <person name="Tanaka A."/>
            <person name="Yokoyama S."/>
        </authorList>
    </citation>
    <scope>NUCLEOTIDE SEQUENCE [LARGE SCALE MRNA] (ISOFORM 1)</scope>
</reference>
<reference key="7">
    <citation type="journal article" date="2007" name="BMC Genomics">
        <title>The full-ORF clone resource of the German cDNA consortium.</title>
        <authorList>
            <person name="Bechtel S."/>
            <person name="Rosenfelder H."/>
            <person name="Duda A."/>
            <person name="Schmidt C.P."/>
            <person name="Ernst U."/>
            <person name="Wellenreuther R."/>
            <person name="Mehrle A."/>
            <person name="Schuster C."/>
            <person name="Bahr A."/>
            <person name="Bloecker H."/>
            <person name="Heubner D."/>
            <person name="Hoerlein A."/>
            <person name="Michel G."/>
            <person name="Wedler H."/>
            <person name="Koehrer K."/>
            <person name="Ottenwaelder B."/>
            <person name="Poustka A."/>
            <person name="Wiemann S."/>
            <person name="Schupp I."/>
        </authorList>
    </citation>
    <scope>NUCLEOTIDE SEQUENCE [LARGE SCALE MRNA] (ISOFORM 2)</scope>
    <source>
        <tissue>Adipose tissue</tissue>
    </source>
</reference>
<reference evidence="12 18" key="8">
    <citation type="journal article" date="2004" name="Nature">
        <title>The DNA sequence and comparative analysis of human chromosome 10.</title>
        <authorList>
            <person name="Deloukas P."/>
            <person name="Earthrowl M.E."/>
            <person name="Grafham D.V."/>
            <person name="Rubenfield M."/>
            <person name="French L."/>
            <person name="Steward C.A."/>
            <person name="Sims S.K."/>
            <person name="Jones M.C."/>
            <person name="Searle S."/>
            <person name="Scott C."/>
            <person name="Howe K."/>
            <person name="Hunt S.E."/>
            <person name="Andrews T.D."/>
            <person name="Gilbert J.G.R."/>
            <person name="Swarbreck D."/>
            <person name="Ashurst J.L."/>
            <person name="Taylor A."/>
            <person name="Battles J."/>
            <person name="Bird C.P."/>
            <person name="Ainscough R."/>
            <person name="Almeida J.P."/>
            <person name="Ashwell R.I.S."/>
            <person name="Ambrose K.D."/>
            <person name="Babbage A.K."/>
            <person name="Bagguley C.L."/>
            <person name="Bailey J."/>
            <person name="Banerjee R."/>
            <person name="Bates K."/>
            <person name="Beasley H."/>
            <person name="Bray-Allen S."/>
            <person name="Brown A.J."/>
            <person name="Brown J.Y."/>
            <person name="Burford D.C."/>
            <person name="Burrill W."/>
            <person name="Burton J."/>
            <person name="Cahill P."/>
            <person name="Camire D."/>
            <person name="Carter N.P."/>
            <person name="Chapman J.C."/>
            <person name="Clark S.Y."/>
            <person name="Clarke G."/>
            <person name="Clee C.M."/>
            <person name="Clegg S."/>
            <person name="Corby N."/>
            <person name="Coulson A."/>
            <person name="Dhami P."/>
            <person name="Dutta I."/>
            <person name="Dunn M."/>
            <person name="Faulkner L."/>
            <person name="Frankish A."/>
            <person name="Frankland J.A."/>
            <person name="Garner P."/>
            <person name="Garnett J."/>
            <person name="Gribble S."/>
            <person name="Griffiths C."/>
            <person name="Grocock R."/>
            <person name="Gustafson E."/>
            <person name="Hammond S."/>
            <person name="Harley J.L."/>
            <person name="Hart E."/>
            <person name="Heath P.D."/>
            <person name="Ho T.P."/>
            <person name="Hopkins B."/>
            <person name="Horne J."/>
            <person name="Howden P.J."/>
            <person name="Huckle E."/>
            <person name="Hynds C."/>
            <person name="Johnson C."/>
            <person name="Johnson D."/>
            <person name="Kana A."/>
            <person name="Kay M."/>
            <person name="Kimberley A.M."/>
            <person name="Kershaw J.K."/>
            <person name="Kokkinaki M."/>
            <person name="Laird G.K."/>
            <person name="Lawlor S."/>
            <person name="Lee H.M."/>
            <person name="Leongamornlert D.A."/>
            <person name="Laird G."/>
            <person name="Lloyd C."/>
            <person name="Lloyd D.M."/>
            <person name="Loveland J."/>
            <person name="Lovell J."/>
            <person name="McLaren S."/>
            <person name="McLay K.E."/>
            <person name="McMurray A."/>
            <person name="Mashreghi-Mohammadi M."/>
            <person name="Matthews L."/>
            <person name="Milne S."/>
            <person name="Nickerson T."/>
            <person name="Nguyen M."/>
            <person name="Overton-Larty E."/>
            <person name="Palmer S.A."/>
            <person name="Pearce A.V."/>
            <person name="Peck A.I."/>
            <person name="Pelan S."/>
            <person name="Phillimore B."/>
            <person name="Porter K."/>
            <person name="Rice C.M."/>
            <person name="Rogosin A."/>
            <person name="Ross M.T."/>
            <person name="Sarafidou T."/>
            <person name="Sehra H.K."/>
            <person name="Shownkeen R."/>
            <person name="Skuce C.D."/>
            <person name="Smith M."/>
            <person name="Standring L."/>
            <person name="Sycamore N."/>
            <person name="Tester J."/>
            <person name="Thorpe A."/>
            <person name="Torcasso W."/>
            <person name="Tracey A."/>
            <person name="Tromans A."/>
            <person name="Tsolas J."/>
            <person name="Wall M."/>
            <person name="Walsh J."/>
            <person name="Wang H."/>
            <person name="Weinstock K."/>
            <person name="West A.P."/>
            <person name="Willey D.L."/>
            <person name="Whitehead S.L."/>
            <person name="Wilming L."/>
            <person name="Wray P.W."/>
            <person name="Young L."/>
            <person name="Chen Y."/>
            <person name="Lovering R.C."/>
            <person name="Moschonas N.K."/>
            <person name="Siebert R."/>
            <person name="Fechtel K."/>
            <person name="Bentley D."/>
            <person name="Durbin R.M."/>
            <person name="Hubbard T."/>
            <person name="Doucette-Stamm L."/>
            <person name="Beck S."/>
            <person name="Smith D.R."/>
            <person name="Rogers J."/>
        </authorList>
    </citation>
    <scope>NUCLEOTIDE SEQUENCE [LARGE SCALE GENOMIC DNA]</scope>
</reference>
<reference evidence="12 20" key="9">
    <citation type="submission" date="2005-09" db="EMBL/GenBank/DDBJ databases">
        <authorList>
            <person name="Mural R.J."/>
            <person name="Istrail S."/>
            <person name="Sutton G."/>
            <person name="Florea L."/>
            <person name="Halpern A.L."/>
            <person name="Mobarry C.M."/>
            <person name="Lippert R."/>
            <person name="Walenz B."/>
            <person name="Shatkay H."/>
            <person name="Dew I."/>
            <person name="Miller J.R."/>
            <person name="Flanigan M.J."/>
            <person name="Edwards N.J."/>
            <person name="Bolanos R."/>
            <person name="Fasulo D."/>
            <person name="Halldorsson B.V."/>
            <person name="Hannenhalli S."/>
            <person name="Turner R."/>
            <person name="Yooseph S."/>
            <person name="Lu F."/>
            <person name="Nusskern D.R."/>
            <person name="Shue B.C."/>
            <person name="Zheng X.H."/>
            <person name="Zhong F."/>
            <person name="Delcher A.L."/>
            <person name="Huson D.H."/>
            <person name="Kravitz S.A."/>
            <person name="Mouchard L."/>
            <person name="Reinert K."/>
            <person name="Remington K.A."/>
            <person name="Clark A.G."/>
            <person name="Waterman M.S."/>
            <person name="Eichler E.E."/>
            <person name="Adams M.D."/>
            <person name="Hunkapiller M.W."/>
            <person name="Myers E.W."/>
            <person name="Venter J.C."/>
        </authorList>
    </citation>
    <scope>NUCLEOTIDE SEQUENCE [LARGE SCALE GENOMIC DNA]</scope>
</reference>
<reference evidence="12 15" key="10">
    <citation type="journal article" date="2004" name="Genome Res.">
        <title>The status, quality, and expansion of the NIH full-length cDNA project: the Mammalian Gene Collection (MGC).</title>
        <authorList>
            <consortium name="The MGC Project Team"/>
        </authorList>
    </citation>
    <scope>NUCLEOTIDE SEQUENCE [LARGE SCALE MRNA] (ISOFORM 1)</scope>
    <source>
        <tissue evidence="17">Colon</tissue>
        <tissue evidence="15">Ovary</tissue>
        <tissue evidence="16">Placenta</tissue>
    </source>
</reference>
<reference evidence="12" key="11">
    <citation type="journal article" date="2003" name="Nat. Biotechnol.">
        <title>Exploring proteomes and analyzing protein processing by mass spectrometric identification of sorted N-terminal peptides.</title>
        <authorList>
            <person name="Gevaert K."/>
            <person name="Goethals M."/>
            <person name="Martens L."/>
            <person name="Van Damme J."/>
            <person name="Staes A."/>
            <person name="Thomas G.R."/>
            <person name="Vandekerckhove J."/>
        </authorList>
    </citation>
    <scope>PROTEIN SEQUENCE OF 2-11</scope>
    <source>
        <tissue evidence="3">Platelet</tissue>
    </source>
</reference>
<reference key="12">
    <citation type="journal article" date="2009" name="Science">
        <title>Lysine acetylation targets protein complexes and co-regulates major cellular functions.</title>
        <authorList>
            <person name="Choudhary C."/>
            <person name="Kumar C."/>
            <person name="Gnad F."/>
            <person name="Nielsen M.L."/>
            <person name="Rehman M."/>
            <person name="Walther T.C."/>
            <person name="Olsen J.V."/>
            <person name="Mann M."/>
        </authorList>
    </citation>
    <scope>ACETYLATION [LARGE SCALE ANALYSIS] AT LYS-304</scope>
    <scope>IDENTIFICATION BY MASS SPECTROMETRY [LARGE SCALE ANALYSIS]</scope>
</reference>
<reference key="13">
    <citation type="journal article" date="2011" name="BMC Syst. Biol.">
        <title>Initial characterization of the human central proteome.</title>
        <authorList>
            <person name="Burkard T.R."/>
            <person name="Planyavsky M."/>
            <person name="Kaupe I."/>
            <person name="Breitwieser F.P."/>
            <person name="Buerckstuemmer T."/>
            <person name="Bennett K.L."/>
            <person name="Superti-Furga G."/>
            <person name="Colinge J."/>
        </authorList>
    </citation>
    <scope>IDENTIFICATION BY MASS SPECTROMETRY [LARGE SCALE ANALYSIS]</scope>
</reference>
<reference key="14">
    <citation type="journal article" date="2012" name="Proc. Natl. Acad. Sci. U.S.A.">
        <title>N-terminal acetylome analyses and functional insights of the N-terminal acetyltransferase NatB.</title>
        <authorList>
            <person name="Van Damme P."/>
            <person name="Lasa M."/>
            <person name="Polevoda B."/>
            <person name="Gazquez C."/>
            <person name="Elosegui-Artola A."/>
            <person name="Kim D.S."/>
            <person name="De Juan-Pardo E."/>
            <person name="Demeyer K."/>
            <person name="Hole K."/>
            <person name="Larrea E."/>
            <person name="Timmerman E."/>
            <person name="Prieto J."/>
            <person name="Arnesen T."/>
            <person name="Sherman F."/>
            <person name="Gevaert K."/>
            <person name="Aldabe R."/>
        </authorList>
    </citation>
    <scope>IDENTIFICATION BY MASS SPECTROMETRY [LARGE SCALE ANALYSIS]</scope>
</reference>
<reference key="15">
    <citation type="journal article" date="2014" name="J. Proteomics">
        <title>An enzyme assisted RP-RPLC approach for in-depth analysis of human liver phosphoproteome.</title>
        <authorList>
            <person name="Bian Y."/>
            <person name="Song C."/>
            <person name="Cheng K."/>
            <person name="Dong M."/>
            <person name="Wang F."/>
            <person name="Huang J."/>
            <person name="Sun D."/>
            <person name="Wang L."/>
            <person name="Ye M."/>
            <person name="Zou H."/>
        </authorList>
    </citation>
    <scope>IDENTIFICATION BY MASS SPECTROMETRY [LARGE SCALE ANALYSIS]</scope>
    <source>
        <tissue>Liver</tissue>
    </source>
</reference>
<reference key="16">
    <citation type="journal article" date="2022" name="Nat. Chem. Biol.">
        <title>M24B aminopeptidase inhibitors selectively activate the CARD8 inflammasome.</title>
        <authorList>
            <person name="Rao S.D."/>
            <person name="Chen Q."/>
            <person name="Wang Q."/>
            <person name="Orth-He E.L."/>
            <person name="Saoi M."/>
            <person name="Griswold A.R."/>
            <person name="Bhattacharjee A."/>
            <person name="Ball D.P."/>
            <person name="Huang H.C."/>
            <person name="Chui A.J."/>
            <person name="Covelli D.J."/>
            <person name="You S."/>
            <person name="Cross J.R."/>
            <person name="Bachovchin D.A."/>
        </authorList>
    </citation>
    <scope>FUNCTION</scope>
    <scope>CATALYTIC ACTIVITY</scope>
    <scope>ACTIVITY REGULATION</scope>
</reference>
<reference key="17">
    <citation type="journal article" date="2008" name="J. Biol. Chem.">
        <title>Structure of human cytosolic X-prolyl aminopeptidase: a double Mn(II)-dependent dimeric enzyme with a novel three-domain subunit.</title>
        <authorList>
            <person name="Li X."/>
            <person name="Lou Z."/>
            <person name="Li X."/>
            <person name="Zhou W."/>
            <person name="Ma M."/>
            <person name="Cao Y."/>
            <person name="Geng Y."/>
            <person name="Bartlam M."/>
            <person name="Zhang X.C."/>
            <person name="Rao Z."/>
        </authorList>
    </citation>
    <scope>X-RAY CRYSTALLOGRAPHY (1.6 ANGSTROMS) IN COMPLEX WITH MANGANESE IONS</scope>
    <scope>FUNCTION</scope>
    <scope>COFACTOR</scope>
    <scope>CATALYTIC ACTIVITY</scope>
    <scope>BIOPHYSICOCHEMICAL PROPERTIES</scope>
    <scope>MUTAGENESIS OF GLU-41 AND TRP-477</scope>
    <scope>SUBUNIT</scope>
</reference>
<sequence>MPPKVTSELLRQLRQAMRNSEYVTEPIQAYIIPSGDAHQSEYIAPCDCRRAFVSGFDGSAGTAIITEEHAAMWTDGRYFLQAAKQMDSNWTLMKMGLKDTPTQEDWLVSVLPEGSRVGVDPLIIPTDYWKKMAKVLRSAGHHLIPVKENLVDKIWTDRPERPCKPLLTLGLDYTGISWKDKVADLRLKMAERNVMWFVVTALDEIAWLFNLRGSDVEHNPVFFSYAIIGLETIMLFIDGDRIDAPSVKEHLLLDLGLEAEYRIQVHPYKSILSELKALCADLSPREKVWVSDKASYAVSETIPKDHRCCMPYTPICIAKAVKNSAESEGMRRAHIKDAVALCELFNWLEKEVPKGGVTEISAADKAEEFRRQQADFVDLSFPTISSTGPNGAIIHYAPVPETNRTLSLDEVYLIDSGAQYKDGTTDVTRTMHFGTPTAYEKECFTYVLKGHIAVSAAVFPTGTKGHLLDSFARSALWDSGLDYLHGTGHGVGSFLNVHEGPCGISYKTFSDEPLEAGMIVTDEPGYYEDGAFGIRIENVVLVVPVKTKYNFNNRGSLTFEPLTLVPIQTKMIDVDSLTDKECDWLNNYHLTCRDVIGKELQKQGRQEALEWLIRETQPISKQH</sequence>
<keyword id="KW-0002">3D-structure</keyword>
<keyword id="KW-0007">Acetylation</keyword>
<keyword id="KW-0025">Alternative splicing</keyword>
<keyword id="KW-0031">Aminopeptidase</keyword>
<keyword id="KW-0963">Cytoplasm</keyword>
<keyword id="KW-0903">Direct protein sequencing</keyword>
<keyword id="KW-0378">Hydrolase</keyword>
<keyword id="KW-0464">Manganese</keyword>
<keyword id="KW-0479">Metal-binding</keyword>
<keyword id="KW-0482">Metalloprotease</keyword>
<keyword id="KW-0645">Protease</keyword>
<keyword id="KW-1267">Proteomics identification</keyword>
<keyword id="KW-1185">Reference proteome</keyword>
<evidence type="ECO:0000250" key="1">
    <source>
        <dbReference type="UniProtKB" id="O44750"/>
    </source>
</evidence>
<evidence type="ECO:0000269" key="2">
    <source>
    </source>
</evidence>
<evidence type="ECO:0000269" key="3">
    <source>
    </source>
</evidence>
<evidence type="ECO:0000269" key="4">
    <source>
    </source>
</evidence>
<evidence type="ECO:0000269" key="5">
    <source>
    </source>
</evidence>
<evidence type="ECO:0000269" key="6">
    <source>
    </source>
</evidence>
<evidence type="ECO:0000303" key="7">
    <source>
    </source>
</evidence>
<evidence type="ECO:0000303" key="8">
    <source>
    </source>
</evidence>
<evidence type="ECO:0000303" key="9">
    <source>
    </source>
</evidence>
<evidence type="ECO:0000303" key="10">
    <source>
    </source>
</evidence>
<evidence type="ECO:0000303" key="11">
    <source>
    </source>
</evidence>
<evidence type="ECO:0000305" key="12"/>
<evidence type="ECO:0000312" key="13">
    <source>
        <dbReference type="EMBL" id="AAF75795.1"/>
    </source>
</evidence>
<evidence type="ECO:0000312" key="14">
    <source>
        <dbReference type="EMBL" id="AAF97866.1"/>
    </source>
</evidence>
<evidence type="ECO:0000312" key="15">
    <source>
        <dbReference type="EMBL" id="AAH05126.1"/>
    </source>
</evidence>
<evidence type="ECO:0000312" key="16">
    <source>
        <dbReference type="EMBL" id="AAH07579.1"/>
    </source>
</evidence>
<evidence type="ECO:0000312" key="17">
    <source>
        <dbReference type="EMBL" id="AAH13417.4"/>
    </source>
</evidence>
<evidence type="ECO:0000312" key="18">
    <source>
        <dbReference type="EMBL" id="AL354951"/>
    </source>
</evidence>
<evidence type="ECO:0000312" key="19">
    <source>
        <dbReference type="EMBL" id="CAA65068.1"/>
    </source>
</evidence>
<evidence type="ECO:0000312" key="20">
    <source>
        <dbReference type="EMBL" id="CAD38640.1"/>
    </source>
</evidence>
<evidence type="ECO:0000312" key="21">
    <source>
        <dbReference type="HGNC" id="HGNC:12822"/>
    </source>
</evidence>
<evidence type="ECO:0007744" key="22">
    <source>
        <dbReference type="PDB" id="3CTZ"/>
    </source>
</evidence>
<evidence type="ECO:0007744" key="23">
    <source>
    </source>
</evidence>
<evidence type="ECO:0007829" key="24">
    <source>
        <dbReference type="PDB" id="3CTZ"/>
    </source>
</evidence>
<proteinExistence type="evidence at protein level"/>
<protein>
    <recommendedName>
        <fullName evidence="12">Xaa-Pro aminopeptidase 1</fullName>
        <ecNumber evidence="2 4 5">3.4.11.9</ecNumber>
    </recommendedName>
    <alternativeName>
        <fullName>Aminoacylproline aminopeptidase</fullName>
    </alternativeName>
    <alternativeName>
        <fullName evidence="8">Cytosolic aminopeptidase P</fullName>
    </alternativeName>
    <alternativeName>
        <fullName evidence="7">Soluble aminopeptidase P</fullName>
        <shortName evidence="7">sAmp</shortName>
    </alternativeName>
    <alternativeName>
        <fullName>X-Pro aminopeptidase 1</fullName>
    </alternativeName>
    <alternativeName>
        <fullName evidence="7">X-prolyl aminopeptidase 1, soluble</fullName>
    </alternativeName>
</protein>
<dbReference type="EC" id="3.4.11.9" evidence="2 4 5"/>
<dbReference type="EMBL" id="X95762">
    <property type="protein sequence ID" value="CAA65068.1"/>
    <property type="molecule type" value="mRNA"/>
</dbReference>
<dbReference type="EMBL" id="AF195530">
    <property type="protein sequence ID" value="AAF97866.1"/>
    <property type="molecule type" value="mRNA"/>
</dbReference>
<dbReference type="EMBL" id="AF272981">
    <property type="protein sequence ID" value="AAF75795.1"/>
    <property type="molecule type" value="mRNA"/>
</dbReference>
<dbReference type="EMBL" id="AK289436">
    <property type="protein sequence ID" value="BAF82125.1"/>
    <property type="molecule type" value="mRNA"/>
</dbReference>
<dbReference type="EMBL" id="CR456922">
    <property type="protein sequence ID" value="CAG33203.1"/>
    <property type="molecule type" value="mRNA"/>
</dbReference>
<dbReference type="EMBL" id="AK223513">
    <property type="protein sequence ID" value="BAD97233.1"/>
    <property type="molecule type" value="mRNA"/>
</dbReference>
<dbReference type="EMBL" id="AL833411">
    <property type="protein sequence ID" value="CAD38640.1"/>
    <property type="status" value="ALT_INIT"/>
    <property type="molecule type" value="mRNA"/>
</dbReference>
<dbReference type="EMBL" id="AL354951">
    <property type="status" value="NOT_ANNOTATED_CDS"/>
    <property type="molecule type" value="Genomic_DNA"/>
</dbReference>
<dbReference type="EMBL" id="CH471066">
    <property type="protein sequence ID" value="EAW49577.1"/>
    <property type="molecule type" value="Genomic_DNA"/>
</dbReference>
<dbReference type="EMBL" id="BC005126">
    <property type="protein sequence ID" value="AAH05126.1"/>
    <property type="molecule type" value="mRNA"/>
</dbReference>
<dbReference type="EMBL" id="BC007579">
    <property type="protein sequence ID" value="AAH07579.1"/>
    <property type="molecule type" value="mRNA"/>
</dbReference>
<dbReference type="EMBL" id="BC013417">
    <property type="protein sequence ID" value="AAH13417.4"/>
    <property type="molecule type" value="mRNA"/>
</dbReference>
<dbReference type="CCDS" id="CCDS53576.1">
    <molecule id="Q9NQW7-4"/>
</dbReference>
<dbReference type="CCDS" id="CCDS7560.2">
    <molecule id="Q9NQW7-3"/>
</dbReference>
<dbReference type="RefSeq" id="NP_001161076.1">
    <molecule id="Q9NQW7-4"/>
    <property type="nucleotide sequence ID" value="NM_001167604.2"/>
</dbReference>
<dbReference type="RefSeq" id="NP_001311061.1">
    <molecule id="Q9NQW7-1"/>
    <property type="nucleotide sequence ID" value="NM_001324132.2"/>
</dbReference>
<dbReference type="RefSeq" id="NP_065116.3">
    <molecule id="Q9NQW7-3"/>
    <property type="nucleotide sequence ID" value="NM_020383.3"/>
</dbReference>
<dbReference type="RefSeq" id="XP_054222659.1">
    <molecule id="Q9NQW7-1"/>
    <property type="nucleotide sequence ID" value="XM_054366684.1"/>
</dbReference>
<dbReference type="PDB" id="3CTZ">
    <property type="method" value="X-ray"/>
    <property type="resolution" value="1.60 A"/>
    <property type="chains" value="A=1-623"/>
</dbReference>
<dbReference type="PDBsum" id="3CTZ"/>
<dbReference type="SMR" id="Q9NQW7"/>
<dbReference type="BioGRID" id="113346">
    <property type="interactions" value="108"/>
</dbReference>
<dbReference type="FunCoup" id="Q9NQW7">
    <property type="interactions" value="2033"/>
</dbReference>
<dbReference type="IntAct" id="Q9NQW7">
    <property type="interactions" value="31"/>
</dbReference>
<dbReference type="MINT" id="Q9NQW7"/>
<dbReference type="STRING" id="9606.ENSP00000421566"/>
<dbReference type="BindingDB" id="Q9NQW7"/>
<dbReference type="ChEMBL" id="CHEMBL3782"/>
<dbReference type="GuidetoPHARMACOLOGY" id="1578"/>
<dbReference type="MEROPS" id="M24.009"/>
<dbReference type="GlyCosmos" id="Q9NQW7">
    <property type="glycosylation" value="1 site, 1 glycan"/>
</dbReference>
<dbReference type="GlyGen" id="Q9NQW7">
    <property type="glycosylation" value="1 site, 1 O-linked glycan (1 site)"/>
</dbReference>
<dbReference type="iPTMnet" id="Q9NQW7"/>
<dbReference type="MetOSite" id="Q9NQW7"/>
<dbReference type="PhosphoSitePlus" id="Q9NQW7"/>
<dbReference type="SwissPalm" id="Q9NQW7"/>
<dbReference type="BioMuta" id="XPNPEP1"/>
<dbReference type="DMDM" id="68566146"/>
<dbReference type="CPTAC" id="CPTAC-694"/>
<dbReference type="CPTAC" id="CPTAC-695"/>
<dbReference type="jPOST" id="Q9NQW7"/>
<dbReference type="MassIVE" id="Q9NQW7"/>
<dbReference type="PaxDb" id="9606-ENSP00000421566"/>
<dbReference type="PeptideAtlas" id="Q9NQW7"/>
<dbReference type="ProteomicsDB" id="34080"/>
<dbReference type="ProteomicsDB" id="34174"/>
<dbReference type="ProteomicsDB" id="82211">
    <molecule id="Q9NQW7-1"/>
</dbReference>
<dbReference type="ProteomicsDB" id="82212">
    <molecule id="Q9NQW7-2"/>
</dbReference>
<dbReference type="Pumba" id="Q9NQW7"/>
<dbReference type="ABCD" id="Q9NQW7">
    <property type="antibodies" value="2 sequenced antibodies"/>
</dbReference>
<dbReference type="Antibodypedia" id="31645">
    <property type="antibodies" value="206 antibodies from 33 providers"/>
</dbReference>
<dbReference type="DNASU" id="7511"/>
<dbReference type="Ensembl" id="ENST00000322238.12">
    <molecule id="Q9NQW7-4"/>
    <property type="protein sequence ID" value="ENSP00000324011.8"/>
    <property type="gene ID" value="ENSG00000108039.18"/>
</dbReference>
<dbReference type="Ensembl" id="ENST00000502935.6">
    <molecule id="Q9NQW7-3"/>
    <property type="protein sequence ID" value="ENSP00000421566.1"/>
    <property type="gene ID" value="ENSG00000108039.18"/>
</dbReference>
<dbReference type="GeneID" id="7511"/>
<dbReference type="KEGG" id="hsa:7511"/>
<dbReference type="MANE-Select" id="ENST00000502935.6">
    <molecule id="Q9NQW7-3"/>
    <property type="protein sequence ID" value="ENSP00000421566.1"/>
    <property type="RefSeq nucleotide sequence ID" value="NM_020383.4"/>
    <property type="RefSeq protein sequence ID" value="NP_065116.3"/>
</dbReference>
<dbReference type="UCSC" id="uc001kyp.2">
    <molecule id="Q9NQW7-1"/>
    <property type="organism name" value="human"/>
</dbReference>
<dbReference type="AGR" id="HGNC:12822"/>
<dbReference type="CTD" id="7511"/>
<dbReference type="DisGeNET" id="7511"/>
<dbReference type="GeneCards" id="XPNPEP1"/>
<dbReference type="HGNC" id="HGNC:12822">
    <property type="gene designation" value="XPNPEP1"/>
</dbReference>
<dbReference type="HPA" id="ENSG00000108039">
    <property type="expression patterns" value="Low tissue specificity"/>
</dbReference>
<dbReference type="MIM" id="602443">
    <property type="type" value="gene"/>
</dbReference>
<dbReference type="neXtProt" id="NX_Q9NQW7"/>
<dbReference type="OpenTargets" id="ENSG00000108039"/>
<dbReference type="PharmGKB" id="PA37415"/>
<dbReference type="VEuPathDB" id="HostDB:ENSG00000108039"/>
<dbReference type="eggNOG" id="KOG2413">
    <property type="taxonomic scope" value="Eukaryota"/>
</dbReference>
<dbReference type="GeneTree" id="ENSGT00940000157716"/>
<dbReference type="HOGENOM" id="CLU_011781_2_2_1"/>
<dbReference type="InParanoid" id="Q9NQW7"/>
<dbReference type="OMA" id="EPGMILS"/>
<dbReference type="OrthoDB" id="9995434at2759"/>
<dbReference type="PAN-GO" id="Q9NQW7">
    <property type="GO annotations" value="0 GO annotations based on evolutionary models"/>
</dbReference>
<dbReference type="PhylomeDB" id="Q9NQW7"/>
<dbReference type="TreeFam" id="TF314183"/>
<dbReference type="BRENDA" id="3.1.8.1">
    <property type="organism ID" value="2681"/>
</dbReference>
<dbReference type="BRENDA" id="3.4.11.9">
    <property type="organism ID" value="2681"/>
</dbReference>
<dbReference type="PathwayCommons" id="Q9NQW7"/>
<dbReference type="SABIO-RK" id="Q9NQW7"/>
<dbReference type="SignaLink" id="Q9NQW7"/>
<dbReference type="BioGRID-ORCS" id="7511">
    <property type="hits" value="25 hits in 1166 CRISPR screens"/>
</dbReference>
<dbReference type="ChiTaRS" id="XPNPEP1">
    <property type="organism name" value="human"/>
</dbReference>
<dbReference type="EvolutionaryTrace" id="Q9NQW7"/>
<dbReference type="GeneWiki" id="XPNPEP1"/>
<dbReference type="GenomeRNAi" id="7511"/>
<dbReference type="Pharos" id="Q9NQW7">
    <property type="development level" value="Tchem"/>
</dbReference>
<dbReference type="PRO" id="PR:Q9NQW7"/>
<dbReference type="Proteomes" id="UP000005640">
    <property type="component" value="Chromosome 10"/>
</dbReference>
<dbReference type="RNAct" id="Q9NQW7">
    <property type="molecule type" value="protein"/>
</dbReference>
<dbReference type="Bgee" id="ENSG00000108039">
    <property type="expression patterns" value="Expressed in body of pancreas and 207 other cell types or tissues"/>
</dbReference>
<dbReference type="ExpressionAtlas" id="Q9NQW7">
    <property type="expression patterns" value="baseline and differential"/>
</dbReference>
<dbReference type="GO" id="GO:0005737">
    <property type="term" value="C:cytoplasm"/>
    <property type="evidence" value="ECO:0000250"/>
    <property type="project" value="UniProtKB"/>
</dbReference>
<dbReference type="GO" id="GO:0005829">
    <property type="term" value="C:cytosol"/>
    <property type="evidence" value="ECO:0000314"/>
    <property type="project" value="HPA"/>
</dbReference>
<dbReference type="GO" id="GO:0070062">
    <property type="term" value="C:extracellular exosome"/>
    <property type="evidence" value="ECO:0007005"/>
    <property type="project" value="UniProtKB"/>
</dbReference>
<dbReference type="GO" id="GO:0004177">
    <property type="term" value="F:aminopeptidase activity"/>
    <property type="evidence" value="ECO:0000314"/>
    <property type="project" value="UniProtKB"/>
</dbReference>
<dbReference type="GO" id="GO:0030145">
    <property type="term" value="F:manganese ion binding"/>
    <property type="evidence" value="ECO:0000314"/>
    <property type="project" value="UniProtKB"/>
</dbReference>
<dbReference type="GO" id="GO:0070006">
    <property type="term" value="F:metalloaminopeptidase activity"/>
    <property type="evidence" value="ECO:0000314"/>
    <property type="project" value="UniProtKB"/>
</dbReference>
<dbReference type="GO" id="GO:0042803">
    <property type="term" value="F:protein homodimerization activity"/>
    <property type="evidence" value="ECO:0000353"/>
    <property type="project" value="UniProtKB"/>
</dbReference>
<dbReference type="GO" id="GO:0010815">
    <property type="term" value="P:bradykinin catabolic process"/>
    <property type="evidence" value="ECO:0000314"/>
    <property type="project" value="UniProtKB"/>
</dbReference>
<dbReference type="GO" id="GO:0043069">
    <property type="term" value="P:negative regulation of programmed cell death"/>
    <property type="evidence" value="ECO:0000314"/>
    <property type="project" value="UniProtKB"/>
</dbReference>
<dbReference type="GO" id="GO:0006508">
    <property type="term" value="P:proteolysis"/>
    <property type="evidence" value="ECO:0000314"/>
    <property type="project" value="UniProtKB"/>
</dbReference>
<dbReference type="CDD" id="cd01085">
    <property type="entry name" value="APP"/>
    <property type="match status" value="1"/>
</dbReference>
<dbReference type="FunFam" id="3.40.350.10:FF:000001">
    <property type="entry name" value="Putative xaa-Pro aminopeptidase 1"/>
    <property type="match status" value="1"/>
</dbReference>
<dbReference type="FunFam" id="3.40.350.10:FF:000004">
    <property type="entry name" value="xaa-Pro aminopeptidase 1 isoform X1"/>
    <property type="match status" value="1"/>
</dbReference>
<dbReference type="FunFam" id="3.90.230.10:FF:000004">
    <property type="entry name" value="xaa-Pro aminopeptidase 1 isoform X1"/>
    <property type="match status" value="1"/>
</dbReference>
<dbReference type="Gene3D" id="3.90.230.10">
    <property type="entry name" value="Creatinase/methionine aminopeptidase superfamily"/>
    <property type="match status" value="1"/>
</dbReference>
<dbReference type="Gene3D" id="3.40.350.10">
    <property type="entry name" value="Creatinase/prolidase N-terminal domain"/>
    <property type="match status" value="2"/>
</dbReference>
<dbReference type="InterPro" id="IPR029149">
    <property type="entry name" value="Creatin/AminoP/Spt16_N"/>
</dbReference>
<dbReference type="InterPro" id="IPR036005">
    <property type="entry name" value="Creatinase/aminopeptidase-like"/>
</dbReference>
<dbReference type="InterPro" id="IPR000587">
    <property type="entry name" value="Creatinase_N"/>
</dbReference>
<dbReference type="InterPro" id="IPR000994">
    <property type="entry name" value="Pept_M24"/>
</dbReference>
<dbReference type="InterPro" id="IPR033740">
    <property type="entry name" value="Pept_M24B"/>
</dbReference>
<dbReference type="InterPro" id="IPR032416">
    <property type="entry name" value="Peptidase_M24_C"/>
</dbReference>
<dbReference type="InterPro" id="IPR001131">
    <property type="entry name" value="Peptidase_M24B_aminopep-P_CS"/>
</dbReference>
<dbReference type="InterPro" id="IPR050422">
    <property type="entry name" value="X-Pro_aminopeptidase_P"/>
</dbReference>
<dbReference type="PANTHER" id="PTHR43763">
    <property type="entry name" value="XAA-PRO AMINOPEPTIDASE 1"/>
    <property type="match status" value="1"/>
</dbReference>
<dbReference type="PANTHER" id="PTHR43763:SF6">
    <property type="entry name" value="XAA-PRO AMINOPEPTIDASE 1"/>
    <property type="match status" value="1"/>
</dbReference>
<dbReference type="Pfam" id="PF01321">
    <property type="entry name" value="Creatinase_N"/>
    <property type="match status" value="1"/>
</dbReference>
<dbReference type="Pfam" id="PF16189">
    <property type="entry name" value="Creatinase_N_2"/>
    <property type="match status" value="1"/>
</dbReference>
<dbReference type="Pfam" id="PF00557">
    <property type="entry name" value="Peptidase_M24"/>
    <property type="match status" value="1"/>
</dbReference>
<dbReference type="Pfam" id="PF16188">
    <property type="entry name" value="Peptidase_M24_C"/>
    <property type="match status" value="1"/>
</dbReference>
<dbReference type="SUPFAM" id="SSF55920">
    <property type="entry name" value="Creatinase/aminopeptidase"/>
    <property type="match status" value="1"/>
</dbReference>
<dbReference type="SUPFAM" id="SSF53092">
    <property type="entry name" value="Creatinase/prolidase N-terminal domain"/>
    <property type="match status" value="1"/>
</dbReference>
<dbReference type="PROSITE" id="PS00491">
    <property type="entry name" value="PROLINE_PEPTIDASE"/>
    <property type="match status" value="1"/>
</dbReference>
<name>XPP1_HUMAN</name>
<comment type="function">
    <text evidence="2 4 5">Metalloaminopeptidase that catalyzes the removal of a penultimate prolyl residue from the N-termini of peptides, such as Arg-Pro-Pro (PubMed:11106490, PubMed:18515364, PubMed:35165443). Contributes to the degradation of bradykinin (PubMed:11106490).</text>
</comment>
<comment type="catalytic activity">
    <reaction evidence="2 4 5">
        <text>Release of any N-terminal amino acid, including proline, that is linked to proline, even from a dipeptide or tripeptide.</text>
        <dbReference type="EC" id="3.4.11.9"/>
    </reaction>
</comment>
<comment type="cofactor">
    <cofactor evidence="2 4">
        <name>Mn(2+)</name>
        <dbReference type="ChEBI" id="CHEBI:29035"/>
    </cofactor>
    <text evidence="2 4">Binds 2 manganese ions per subunit.</text>
</comment>
<comment type="activity regulation">
    <text evidence="2 5">Inhibited by apstatin and the metal ion chelators EDTA and 1,10-phenanthroline (PubMed:11106490). Partially inhibited by dithiothreitol. Not inhibited by enalaprilat or amastatin (PubMed:11106490). Specifically inhibited by the pseudodipeptide CQ31 (PubMed:35165443). Inhibition by CQ31 indirectly activates the CARD8 inflammasome: dipeptide accumulation following PEPD inactivation weaky inhibit dipeptidyl peptidases DDP8 and DPP9, relieving DPP8- and/or DPP9-mediated inhibition of CARD8 (PubMed:35165443).</text>
</comment>
<comment type="biophysicochemical properties">
    <kinetics>
        <KM evidence="2 4">100.6 uM for bradykinin</KM>
        <KM evidence="2 4">308 uM for the tripeptide Arg-Pro-Pro</KM>
    </kinetics>
    <phDependence>
        <text evidence="2 4">Optimum pH is 8.2.</text>
    </phDependence>
</comment>
<comment type="subunit">
    <text evidence="2 4">Homodimer.</text>
</comment>
<comment type="interaction">
    <interactant intactId="EBI-12079490">
        <id>Q9NQW7-3</id>
    </interactant>
    <interactant intactId="EBI-742054">
        <id>Q96D03</id>
        <label>DDIT4L</label>
    </interactant>
    <organismsDiffer>false</organismsDiffer>
    <experiments>3</experiments>
</comment>
<comment type="interaction">
    <interactant intactId="EBI-12079490">
        <id>Q9NQW7-3</id>
    </interactant>
    <interactant intactId="EBI-739467">
        <id>Q9H8Y8</id>
        <label>GORASP2</label>
    </interactant>
    <organismsDiffer>false</organismsDiffer>
    <experiments>3</experiments>
</comment>
<comment type="interaction">
    <interactant intactId="EBI-12079490">
        <id>Q9NQW7-3</id>
    </interactant>
    <interactant intactId="EBI-3910089">
        <id>P69892</id>
        <label>HBG2</label>
    </interactant>
    <organismsDiffer>false</organismsDiffer>
    <experiments>3</experiments>
</comment>
<comment type="interaction">
    <interactant intactId="EBI-12079490">
        <id>Q9NQW7-3</id>
    </interactant>
    <interactant intactId="EBI-1244971">
        <id>Q15669</id>
        <label>RHOH</label>
    </interactant>
    <organismsDiffer>false</organismsDiffer>
    <experiments>3</experiments>
</comment>
<comment type="subcellular location">
    <subcellularLocation>
        <location evidence="2">Cytoplasm</location>
        <location evidence="2">Cytosol</location>
    </subcellularLocation>
</comment>
<comment type="alternative products">
    <event type="alternative splicing"/>
    <isoform>
        <id>Q9NQW7-1</id>
        <name evidence="6">1</name>
        <sequence type="displayed"/>
    </isoform>
    <isoform>
        <id>Q9NQW7-2</id>
        <name>2</name>
        <sequence type="described" ref="VSP_051752"/>
    </isoform>
    <isoform>
        <id>Q9NQW7-3</id>
        <name>3</name>
        <sequence type="described" ref="VSP_045250"/>
    </isoform>
    <isoform>
        <id>Q9NQW7-4</id>
        <name>4</name>
        <sequence type="described" ref="VSP_045250 VSP_051752"/>
    </isoform>
</comment>
<comment type="tissue specificity">
    <text evidence="6">Expressed in all tissues tested, including pancreas, heart, muscle, kidney, liver, lung and brain. Highest levels in pancreas.</text>
</comment>
<comment type="similarity">
    <text evidence="12">Belongs to the peptidase M24B family.</text>
</comment>
<comment type="sequence caution" evidence="12">
    <conflict type="erroneous initiation">
        <sequence resource="EMBL-CDS" id="CAD38640"/>
    </conflict>
    <text>Extended N-terminus.</text>
</comment>
<gene>
    <name evidence="7 21" type="primary">XPNPEP1</name>
    <name evidence="11" type="synonym">XPNPEPL</name>
    <name type="synonym">XPNPEPL1</name>
</gene>
<organism>
    <name type="scientific">Homo sapiens</name>
    <name type="common">Human</name>
    <dbReference type="NCBI Taxonomy" id="9606"/>
    <lineage>
        <taxon>Eukaryota</taxon>
        <taxon>Metazoa</taxon>
        <taxon>Chordata</taxon>
        <taxon>Craniata</taxon>
        <taxon>Vertebrata</taxon>
        <taxon>Euteleostomi</taxon>
        <taxon>Mammalia</taxon>
        <taxon>Eutheria</taxon>
        <taxon>Euarchontoglires</taxon>
        <taxon>Primates</taxon>
        <taxon>Haplorrhini</taxon>
        <taxon>Catarrhini</taxon>
        <taxon>Hominidae</taxon>
        <taxon>Homo</taxon>
    </lineage>
</organism>
<accession>Q9NQW7</accession>
<accession>A8K071</accession>
<accession>G5E9Y2</accession>
<accession>G8JLB2</accession>
<accession>O15250</accession>
<accession>Q53EX6</accession>
<accession>Q8N3Q0</accession>
<accession>Q96D23</accession>